<organism>
    <name type="scientific">Rhodococcus opacus (strain B4)</name>
    <dbReference type="NCBI Taxonomy" id="632772"/>
    <lineage>
        <taxon>Bacteria</taxon>
        <taxon>Bacillati</taxon>
        <taxon>Actinomycetota</taxon>
        <taxon>Actinomycetes</taxon>
        <taxon>Mycobacteriales</taxon>
        <taxon>Nocardiaceae</taxon>
        <taxon>Rhodococcus</taxon>
    </lineage>
</organism>
<protein>
    <recommendedName>
        <fullName evidence="1">Glutamate 5-kinase</fullName>
        <ecNumber evidence="1">2.7.2.11</ecNumber>
    </recommendedName>
    <alternativeName>
        <fullName evidence="1">Gamma-glutamyl kinase</fullName>
        <shortName evidence="1">GK</shortName>
    </alternativeName>
</protein>
<accession>C1AVJ9</accession>
<evidence type="ECO:0000255" key="1">
    <source>
        <dbReference type="HAMAP-Rule" id="MF_00456"/>
    </source>
</evidence>
<feature type="chain" id="PRO_1000193702" description="Glutamate 5-kinase">
    <location>
        <begin position="1"/>
        <end position="366"/>
    </location>
</feature>
<feature type="domain" description="PUA" evidence="1">
    <location>
        <begin position="278"/>
        <end position="352"/>
    </location>
</feature>
<feature type="binding site" evidence="1">
    <location>
        <position position="17"/>
    </location>
    <ligand>
        <name>ATP</name>
        <dbReference type="ChEBI" id="CHEBI:30616"/>
    </ligand>
</feature>
<feature type="binding site" evidence="1">
    <location>
        <position position="57"/>
    </location>
    <ligand>
        <name>substrate</name>
    </ligand>
</feature>
<feature type="binding site" evidence="1">
    <location>
        <position position="144"/>
    </location>
    <ligand>
        <name>substrate</name>
    </ligand>
</feature>
<feature type="binding site" evidence="1">
    <location>
        <position position="156"/>
    </location>
    <ligand>
        <name>substrate</name>
    </ligand>
</feature>
<feature type="binding site" evidence="1">
    <location>
        <begin position="176"/>
        <end position="177"/>
    </location>
    <ligand>
        <name>ATP</name>
        <dbReference type="ChEBI" id="CHEBI:30616"/>
    </ligand>
</feature>
<feature type="binding site" evidence="1">
    <location>
        <begin position="216"/>
        <end position="222"/>
    </location>
    <ligand>
        <name>ATP</name>
        <dbReference type="ChEBI" id="CHEBI:30616"/>
    </ligand>
</feature>
<dbReference type="EC" id="2.7.2.11" evidence="1"/>
<dbReference type="EMBL" id="AP011115">
    <property type="protein sequence ID" value="BAH49279.1"/>
    <property type="molecule type" value="Genomic_DNA"/>
</dbReference>
<dbReference type="RefSeq" id="WP_012688265.1">
    <property type="nucleotide sequence ID" value="NC_012522.1"/>
</dbReference>
<dbReference type="SMR" id="C1AVJ9"/>
<dbReference type="STRING" id="632772.ROP_10320"/>
<dbReference type="KEGG" id="rop:ROP_10320"/>
<dbReference type="PATRIC" id="fig|632772.20.peg.1098"/>
<dbReference type="HOGENOM" id="CLU_025400_2_0_11"/>
<dbReference type="OrthoDB" id="9804434at2"/>
<dbReference type="UniPathway" id="UPA00098">
    <property type="reaction ID" value="UER00359"/>
</dbReference>
<dbReference type="Proteomes" id="UP000002212">
    <property type="component" value="Chromosome"/>
</dbReference>
<dbReference type="GO" id="GO:0005829">
    <property type="term" value="C:cytosol"/>
    <property type="evidence" value="ECO:0007669"/>
    <property type="project" value="TreeGrafter"/>
</dbReference>
<dbReference type="GO" id="GO:0005524">
    <property type="term" value="F:ATP binding"/>
    <property type="evidence" value="ECO:0007669"/>
    <property type="project" value="UniProtKB-KW"/>
</dbReference>
<dbReference type="GO" id="GO:0004349">
    <property type="term" value="F:glutamate 5-kinase activity"/>
    <property type="evidence" value="ECO:0007669"/>
    <property type="project" value="UniProtKB-UniRule"/>
</dbReference>
<dbReference type="GO" id="GO:0003723">
    <property type="term" value="F:RNA binding"/>
    <property type="evidence" value="ECO:0007669"/>
    <property type="project" value="InterPro"/>
</dbReference>
<dbReference type="GO" id="GO:0055129">
    <property type="term" value="P:L-proline biosynthetic process"/>
    <property type="evidence" value="ECO:0007669"/>
    <property type="project" value="UniProtKB-UniRule"/>
</dbReference>
<dbReference type="CDD" id="cd21157">
    <property type="entry name" value="PUA_G5K"/>
    <property type="match status" value="1"/>
</dbReference>
<dbReference type="FunFam" id="3.40.1160.10:FF:000018">
    <property type="entry name" value="Glutamate 5-kinase"/>
    <property type="match status" value="1"/>
</dbReference>
<dbReference type="Gene3D" id="3.40.1160.10">
    <property type="entry name" value="Acetylglutamate kinase-like"/>
    <property type="match status" value="2"/>
</dbReference>
<dbReference type="Gene3D" id="2.30.130.10">
    <property type="entry name" value="PUA domain"/>
    <property type="match status" value="1"/>
</dbReference>
<dbReference type="HAMAP" id="MF_00456">
    <property type="entry name" value="ProB"/>
    <property type="match status" value="1"/>
</dbReference>
<dbReference type="InterPro" id="IPR036393">
    <property type="entry name" value="AceGlu_kinase-like_sf"/>
</dbReference>
<dbReference type="InterPro" id="IPR001048">
    <property type="entry name" value="Asp/Glu/Uridylate_kinase"/>
</dbReference>
<dbReference type="InterPro" id="IPR001057">
    <property type="entry name" value="Glu/AcGlu_kinase"/>
</dbReference>
<dbReference type="InterPro" id="IPR011529">
    <property type="entry name" value="Glu_5kinase"/>
</dbReference>
<dbReference type="InterPro" id="IPR005715">
    <property type="entry name" value="Glu_5kinase/COase_Synthase"/>
</dbReference>
<dbReference type="InterPro" id="IPR019797">
    <property type="entry name" value="Glutamate_5-kinase_CS"/>
</dbReference>
<dbReference type="InterPro" id="IPR002478">
    <property type="entry name" value="PUA"/>
</dbReference>
<dbReference type="InterPro" id="IPR015947">
    <property type="entry name" value="PUA-like_sf"/>
</dbReference>
<dbReference type="InterPro" id="IPR036974">
    <property type="entry name" value="PUA_sf"/>
</dbReference>
<dbReference type="NCBIfam" id="TIGR01027">
    <property type="entry name" value="proB"/>
    <property type="match status" value="1"/>
</dbReference>
<dbReference type="PANTHER" id="PTHR43654">
    <property type="entry name" value="GLUTAMATE 5-KINASE"/>
    <property type="match status" value="1"/>
</dbReference>
<dbReference type="PANTHER" id="PTHR43654:SF1">
    <property type="entry name" value="ISOPENTENYL PHOSPHATE KINASE"/>
    <property type="match status" value="1"/>
</dbReference>
<dbReference type="Pfam" id="PF00696">
    <property type="entry name" value="AA_kinase"/>
    <property type="match status" value="1"/>
</dbReference>
<dbReference type="Pfam" id="PF01472">
    <property type="entry name" value="PUA"/>
    <property type="match status" value="1"/>
</dbReference>
<dbReference type="PIRSF" id="PIRSF000729">
    <property type="entry name" value="GK"/>
    <property type="match status" value="1"/>
</dbReference>
<dbReference type="PRINTS" id="PR00474">
    <property type="entry name" value="GLU5KINASE"/>
</dbReference>
<dbReference type="SMART" id="SM00359">
    <property type="entry name" value="PUA"/>
    <property type="match status" value="1"/>
</dbReference>
<dbReference type="SUPFAM" id="SSF53633">
    <property type="entry name" value="Carbamate kinase-like"/>
    <property type="match status" value="1"/>
</dbReference>
<dbReference type="SUPFAM" id="SSF88697">
    <property type="entry name" value="PUA domain-like"/>
    <property type="match status" value="1"/>
</dbReference>
<dbReference type="PROSITE" id="PS00902">
    <property type="entry name" value="GLUTAMATE_5_KINASE"/>
    <property type="match status" value="1"/>
</dbReference>
<dbReference type="PROSITE" id="PS50890">
    <property type="entry name" value="PUA"/>
    <property type="match status" value="1"/>
</dbReference>
<keyword id="KW-0028">Amino-acid biosynthesis</keyword>
<keyword id="KW-0067">ATP-binding</keyword>
<keyword id="KW-0963">Cytoplasm</keyword>
<keyword id="KW-0418">Kinase</keyword>
<keyword id="KW-0547">Nucleotide-binding</keyword>
<keyword id="KW-0641">Proline biosynthesis</keyword>
<keyword id="KW-0808">Transferase</keyword>
<sequence>MSATRRTVASAGSIVVKIGSSALTSLVGGLDVGRLDALADAIEARMRAGSDVVVVSSGAVGAGLAPLGLTKRPRDLATKQAAASVGQLALAHAWGTSFARYGRTVGQVLLTADDIARRAQHRNAQRTLDRLRALHAVAIVNENDTVATAELRFGDNDRLAALVAHLVGADALVLLSDVDGLYDGDPRKGNATLIPEVNSPEDLDGVVAGSGGALGTGGMASKLSAARLAADAGVPVLLAAASDAGAALRDASVGTAFAARPSRLSARKFWVRHAADEQGILHIDEGAVRAVVTRRRSLLPAGITAVSGRFYGGDVVSLLGPEERPVARGVVAYDSAEISDILGKSTQELPAEMQRPVVHADDLVPL</sequence>
<proteinExistence type="inferred from homology"/>
<name>PROB_RHOOB</name>
<gene>
    <name evidence="1" type="primary">proB</name>
    <name type="ordered locus">ROP_10320</name>
</gene>
<comment type="function">
    <text evidence="1">Catalyzes the transfer of a phosphate group to glutamate to form L-glutamate 5-phosphate.</text>
</comment>
<comment type="catalytic activity">
    <reaction evidence="1">
        <text>L-glutamate + ATP = L-glutamyl 5-phosphate + ADP</text>
        <dbReference type="Rhea" id="RHEA:14877"/>
        <dbReference type="ChEBI" id="CHEBI:29985"/>
        <dbReference type="ChEBI" id="CHEBI:30616"/>
        <dbReference type="ChEBI" id="CHEBI:58274"/>
        <dbReference type="ChEBI" id="CHEBI:456216"/>
        <dbReference type="EC" id="2.7.2.11"/>
    </reaction>
</comment>
<comment type="pathway">
    <text evidence="1">Amino-acid biosynthesis; L-proline biosynthesis; L-glutamate 5-semialdehyde from L-glutamate: step 1/2.</text>
</comment>
<comment type="subcellular location">
    <subcellularLocation>
        <location evidence="1">Cytoplasm</location>
    </subcellularLocation>
</comment>
<comment type="similarity">
    <text evidence="1">Belongs to the glutamate 5-kinase family.</text>
</comment>
<reference key="1">
    <citation type="submission" date="2009-03" db="EMBL/GenBank/DDBJ databases">
        <title>Comparison of the complete genome sequences of Rhodococcus erythropolis PR4 and Rhodococcus opacus B4.</title>
        <authorList>
            <person name="Takarada H."/>
            <person name="Sekine M."/>
            <person name="Hosoyama A."/>
            <person name="Yamada R."/>
            <person name="Fujisawa T."/>
            <person name="Omata S."/>
            <person name="Shimizu A."/>
            <person name="Tsukatani N."/>
            <person name="Tanikawa S."/>
            <person name="Fujita N."/>
            <person name="Harayama S."/>
        </authorList>
    </citation>
    <scope>NUCLEOTIDE SEQUENCE [LARGE SCALE GENOMIC DNA]</scope>
    <source>
        <strain>B4</strain>
    </source>
</reference>